<keyword id="KW-0021">Allosteric enzyme</keyword>
<keyword id="KW-0067">ATP-binding</keyword>
<keyword id="KW-0963">Cytoplasm</keyword>
<keyword id="KW-0418">Kinase</keyword>
<keyword id="KW-0547">Nucleotide-binding</keyword>
<keyword id="KW-0665">Pyrimidine biosynthesis</keyword>
<keyword id="KW-0808">Transferase</keyword>
<protein>
    <recommendedName>
        <fullName evidence="1">Uridylate kinase</fullName>
        <shortName evidence="1">UK</shortName>
        <ecNumber evidence="1">2.7.4.22</ecNumber>
    </recommendedName>
    <alternativeName>
        <fullName evidence="1">Uridine monophosphate kinase</fullName>
        <shortName evidence="1">UMP kinase</shortName>
        <shortName evidence="1">UMPK</shortName>
    </alternativeName>
</protein>
<comment type="function">
    <text evidence="1">Catalyzes the reversible phosphorylation of UMP to UDP.</text>
</comment>
<comment type="catalytic activity">
    <reaction evidence="1">
        <text>UMP + ATP = UDP + ADP</text>
        <dbReference type="Rhea" id="RHEA:24400"/>
        <dbReference type="ChEBI" id="CHEBI:30616"/>
        <dbReference type="ChEBI" id="CHEBI:57865"/>
        <dbReference type="ChEBI" id="CHEBI:58223"/>
        <dbReference type="ChEBI" id="CHEBI:456216"/>
        <dbReference type="EC" id="2.7.4.22"/>
    </reaction>
</comment>
<comment type="activity regulation">
    <text evidence="1">Allosterically activated by GTP. Inhibited by UTP.</text>
</comment>
<comment type="pathway">
    <text evidence="1">Pyrimidine metabolism; CTP biosynthesis via de novo pathway; UDP from UMP (UMPK route): step 1/1.</text>
</comment>
<comment type="subunit">
    <text evidence="1">Homohexamer.</text>
</comment>
<comment type="subcellular location">
    <subcellularLocation>
        <location evidence="1">Cytoplasm</location>
    </subcellularLocation>
</comment>
<comment type="similarity">
    <text evidence="1">Belongs to the UMP kinase family.</text>
</comment>
<evidence type="ECO:0000255" key="1">
    <source>
        <dbReference type="HAMAP-Rule" id="MF_01220"/>
    </source>
</evidence>
<accession>A7Z4S2</accession>
<organism>
    <name type="scientific">Bacillus velezensis (strain DSM 23117 / BGSC 10A6 / LMG 26770 / FZB42)</name>
    <name type="common">Bacillus amyloliquefaciens subsp. plantarum</name>
    <dbReference type="NCBI Taxonomy" id="326423"/>
    <lineage>
        <taxon>Bacteria</taxon>
        <taxon>Bacillati</taxon>
        <taxon>Bacillota</taxon>
        <taxon>Bacilli</taxon>
        <taxon>Bacillales</taxon>
        <taxon>Bacillaceae</taxon>
        <taxon>Bacillus</taxon>
        <taxon>Bacillus amyloliquefaciens group</taxon>
    </lineage>
</organism>
<name>PYRH_BACVZ</name>
<feature type="chain" id="PRO_1000053888" description="Uridylate kinase">
    <location>
        <begin position="1"/>
        <end position="240"/>
    </location>
</feature>
<feature type="region of interest" description="Involved in allosteric activation by GTP" evidence="1">
    <location>
        <begin position="20"/>
        <end position="25"/>
    </location>
</feature>
<feature type="binding site" evidence="1">
    <location>
        <begin position="12"/>
        <end position="15"/>
    </location>
    <ligand>
        <name>ATP</name>
        <dbReference type="ChEBI" id="CHEBI:30616"/>
    </ligand>
</feature>
<feature type="binding site" evidence="1">
    <location>
        <position position="54"/>
    </location>
    <ligand>
        <name>UMP</name>
        <dbReference type="ChEBI" id="CHEBI:57865"/>
    </ligand>
</feature>
<feature type="binding site" evidence="1">
    <location>
        <position position="55"/>
    </location>
    <ligand>
        <name>ATP</name>
        <dbReference type="ChEBI" id="CHEBI:30616"/>
    </ligand>
</feature>
<feature type="binding site" evidence="1">
    <location>
        <position position="59"/>
    </location>
    <ligand>
        <name>ATP</name>
        <dbReference type="ChEBI" id="CHEBI:30616"/>
    </ligand>
</feature>
<feature type="binding site" evidence="1">
    <location>
        <position position="74"/>
    </location>
    <ligand>
        <name>UMP</name>
        <dbReference type="ChEBI" id="CHEBI:57865"/>
    </ligand>
</feature>
<feature type="binding site" evidence="1">
    <location>
        <begin position="135"/>
        <end position="142"/>
    </location>
    <ligand>
        <name>UMP</name>
        <dbReference type="ChEBI" id="CHEBI:57865"/>
    </ligand>
</feature>
<feature type="binding site" evidence="1">
    <location>
        <position position="163"/>
    </location>
    <ligand>
        <name>ATP</name>
        <dbReference type="ChEBI" id="CHEBI:30616"/>
    </ligand>
</feature>
<feature type="binding site" evidence="1">
    <location>
        <position position="169"/>
    </location>
    <ligand>
        <name>ATP</name>
        <dbReference type="ChEBI" id="CHEBI:30616"/>
    </ligand>
</feature>
<feature type="binding site" evidence="1">
    <location>
        <position position="172"/>
    </location>
    <ligand>
        <name>ATP</name>
        <dbReference type="ChEBI" id="CHEBI:30616"/>
    </ligand>
</feature>
<reference key="1">
    <citation type="journal article" date="2007" name="Nat. Biotechnol.">
        <title>Comparative analysis of the complete genome sequence of the plant growth-promoting bacterium Bacillus amyloliquefaciens FZB42.</title>
        <authorList>
            <person name="Chen X.H."/>
            <person name="Koumoutsi A."/>
            <person name="Scholz R."/>
            <person name="Eisenreich A."/>
            <person name="Schneider K."/>
            <person name="Heinemeyer I."/>
            <person name="Morgenstern B."/>
            <person name="Voss B."/>
            <person name="Hess W.R."/>
            <person name="Reva O."/>
            <person name="Junge H."/>
            <person name="Voigt B."/>
            <person name="Jungblut P.R."/>
            <person name="Vater J."/>
            <person name="Suessmuth R."/>
            <person name="Liesegang H."/>
            <person name="Strittmatter A."/>
            <person name="Gottschalk G."/>
            <person name="Borriss R."/>
        </authorList>
    </citation>
    <scope>NUCLEOTIDE SEQUENCE [LARGE SCALE GENOMIC DNA]</scope>
    <source>
        <strain>DSM 23117 / BGSC 10A6 / LMG 26770 / FZB42</strain>
    </source>
</reference>
<sequence length="240" mass="26096">MEKPKYNRIVLKLSGEALAGEQGNGINPTVIQSIAKQVKEIAELDVEVAVVVGGGNLWRGKTGSDLGMDRATADYMGMLATVMNSLALQDSLETLGIQSRVQTSIEMRQVAEPYIRRKAIRHLEKKRVVIFAAGTGNPYFSTDTTAALRAAEIEADVILMAKNNVDGVYNADPRKDESAVKYEKLSYLDVLKDGLEVMDSTASSLCMDNDIPLIVFSIMEEGNIKRAVIGESIGTIVRGK</sequence>
<dbReference type="EC" id="2.7.4.22" evidence="1"/>
<dbReference type="EMBL" id="CP000560">
    <property type="protein sequence ID" value="ABS73998.1"/>
    <property type="molecule type" value="Genomic_DNA"/>
</dbReference>
<dbReference type="RefSeq" id="WP_003154213.1">
    <property type="nucleotide sequence ID" value="NC_009725.2"/>
</dbReference>
<dbReference type="SMR" id="A7Z4S2"/>
<dbReference type="GeneID" id="93080768"/>
<dbReference type="KEGG" id="bay:RBAM_016350"/>
<dbReference type="HOGENOM" id="CLU_033861_0_0_9"/>
<dbReference type="UniPathway" id="UPA00159">
    <property type="reaction ID" value="UER00275"/>
</dbReference>
<dbReference type="Proteomes" id="UP000001120">
    <property type="component" value="Chromosome"/>
</dbReference>
<dbReference type="GO" id="GO:0005737">
    <property type="term" value="C:cytoplasm"/>
    <property type="evidence" value="ECO:0007669"/>
    <property type="project" value="UniProtKB-SubCell"/>
</dbReference>
<dbReference type="GO" id="GO:0005524">
    <property type="term" value="F:ATP binding"/>
    <property type="evidence" value="ECO:0007669"/>
    <property type="project" value="UniProtKB-KW"/>
</dbReference>
<dbReference type="GO" id="GO:0033862">
    <property type="term" value="F:UMP kinase activity"/>
    <property type="evidence" value="ECO:0007669"/>
    <property type="project" value="UniProtKB-EC"/>
</dbReference>
<dbReference type="GO" id="GO:0044210">
    <property type="term" value="P:'de novo' CTP biosynthetic process"/>
    <property type="evidence" value="ECO:0007669"/>
    <property type="project" value="UniProtKB-UniRule"/>
</dbReference>
<dbReference type="GO" id="GO:0006225">
    <property type="term" value="P:UDP biosynthetic process"/>
    <property type="evidence" value="ECO:0007669"/>
    <property type="project" value="TreeGrafter"/>
</dbReference>
<dbReference type="CDD" id="cd04254">
    <property type="entry name" value="AAK_UMPK-PyrH-Ec"/>
    <property type="match status" value="1"/>
</dbReference>
<dbReference type="FunFam" id="3.40.1160.10:FF:000001">
    <property type="entry name" value="Uridylate kinase"/>
    <property type="match status" value="1"/>
</dbReference>
<dbReference type="Gene3D" id="3.40.1160.10">
    <property type="entry name" value="Acetylglutamate kinase-like"/>
    <property type="match status" value="1"/>
</dbReference>
<dbReference type="HAMAP" id="MF_01220_B">
    <property type="entry name" value="PyrH_B"/>
    <property type="match status" value="1"/>
</dbReference>
<dbReference type="InterPro" id="IPR036393">
    <property type="entry name" value="AceGlu_kinase-like_sf"/>
</dbReference>
<dbReference type="InterPro" id="IPR001048">
    <property type="entry name" value="Asp/Glu/Uridylate_kinase"/>
</dbReference>
<dbReference type="InterPro" id="IPR011817">
    <property type="entry name" value="Uridylate_kinase"/>
</dbReference>
<dbReference type="InterPro" id="IPR015963">
    <property type="entry name" value="Uridylate_kinase_bac"/>
</dbReference>
<dbReference type="NCBIfam" id="TIGR02075">
    <property type="entry name" value="pyrH_bact"/>
    <property type="match status" value="1"/>
</dbReference>
<dbReference type="PANTHER" id="PTHR42833">
    <property type="entry name" value="URIDYLATE KINASE"/>
    <property type="match status" value="1"/>
</dbReference>
<dbReference type="PANTHER" id="PTHR42833:SF4">
    <property type="entry name" value="URIDYLATE KINASE PUMPKIN, CHLOROPLASTIC"/>
    <property type="match status" value="1"/>
</dbReference>
<dbReference type="Pfam" id="PF00696">
    <property type="entry name" value="AA_kinase"/>
    <property type="match status" value="1"/>
</dbReference>
<dbReference type="PIRSF" id="PIRSF005650">
    <property type="entry name" value="Uridylate_kin"/>
    <property type="match status" value="1"/>
</dbReference>
<dbReference type="SUPFAM" id="SSF53633">
    <property type="entry name" value="Carbamate kinase-like"/>
    <property type="match status" value="1"/>
</dbReference>
<proteinExistence type="inferred from homology"/>
<gene>
    <name evidence="1" type="primary">pyrH</name>
    <name type="ordered locus">RBAM_016350</name>
</gene>